<dbReference type="EMBL" id="AL132960">
    <property type="protein sequence ID" value="CAB88351.1"/>
    <property type="molecule type" value="Genomic_DNA"/>
</dbReference>
<dbReference type="EMBL" id="CP002686">
    <property type="protein sequence ID" value="AEE79154.1"/>
    <property type="molecule type" value="Genomic_DNA"/>
</dbReference>
<dbReference type="EMBL" id="CP002686">
    <property type="protein sequence ID" value="AEE79155.1"/>
    <property type="molecule type" value="Genomic_DNA"/>
</dbReference>
<dbReference type="EMBL" id="AY065200">
    <property type="protein sequence ID" value="AAL38376.1"/>
    <property type="molecule type" value="mRNA"/>
</dbReference>
<dbReference type="EMBL" id="AY081547">
    <property type="protein sequence ID" value="AAM10109.1"/>
    <property type="molecule type" value="mRNA"/>
</dbReference>
<dbReference type="PIR" id="T45929">
    <property type="entry name" value="T45929"/>
</dbReference>
<dbReference type="RefSeq" id="NP_001078280.1">
    <property type="nucleotide sequence ID" value="NM_001084811.1"/>
</dbReference>
<dbReference type="RefSeq" id="NP_190957.1">
    <property type="nucleotide sequence ID" value="NM_115249.4"/>
</dbReference>
<dbReference type="SMR" id="Q9M337"/>
<dbReference type="BioGRID" id="9873">
    <property type="interactions" value="2"/>
</dbReference>
<dbReference type="FunCoup" id="Q9M337">
    <property type="interactions" value="3061"/>
</dbReference>
<dbReference type="IntAct" id="Q9M337">
    <property type="interactions" value="1"/>
</dbReference>
<dbReference type="STRING" id="3702.Q9M337"/>
<dbReference type="iPTMnet" id="Q9M337"/>
<dbReference type="PaxDb" id="3702-AT3G53890.1"/>
<dbReference type="ProteomicsDB" id="226515"/>
<dbReference type="EnsemblPlants" id="AT3G53890.1">
    <property type="protein sequence ID" value="AT3G53890.1"/>
    <property type="gene ID" value="AT3G53890"/>
</dbReference>
<dbReference type="EnsemblPlants" id="AT3G53890.2">
    <property type="protein sequence ID" value="AT3G53890.2"/>
    <property type="gene ID" value="AT3G53890"/>
</dbReference>
<dbReference type="GeneID" id="824556"/>
<dbReference type="Gramene" id="AT3G53890.1">
    <property type="protein sequence ID" value="AT3G53890.1"/>
    <property type="gene ID" value="AT3G53890"/>
</dbReference>
<dbReference type="Gramene" id="AT3G53890.2">
    <property type="protein sequence ID" value="AT3G53890.2"/>
    <property type="gene ID" value="AT3G53890"/>
</dbReference>
<dbReference type="KEGG" id="ath:AT3G53890"/>
<dbReference type="Araport" id="AT3G53890"/>
<dbReference type="TAIR" id="AT3G53890">
    <property type="gene designation" value="EVR1"/>
</dbReference>
<dbReference type="eggNOG" id="KOG3486">
    <property type="taxonomic scope" value="Eukaryota"/>
</dbReference>
<dbReference type="HOGENOM" id="CLU_167122_1_0_1"/>
<dbReference type="InParanoid" id="Q9M337"/>
<dbReference type="OMA" id="GESDACM"/>
<dbReference type="OrthoDB" id="1027799at2759"/>
<dbReference type="PhylomeDB" id="Q9M337"/>
<dbReference type="PRO" id="PR:Q9M337"/>
<dbReference type="Proteomes" id="UP000006548">
    <property type="component" value="Chromosome 3"/>
</dbReference>
<dbReference type="ExpressionAtlas" id="Q9M337">
    <property type="expression patterns" value="baseline and differential"/>
</dbReference>
<dbReference type="GO" id="GO:0005829">
    <property type="term" value="C:cytosol"/>
    <property type="evidence" value="ECO:0000314"/>
    <property type="project" value="TAIR"/>
</dbReference>
<dbReference type="GO" id="GO:0022626">
    <property type="term" value="C:cytosolic ribosome"/>
    <property type="evidence" value="ECO:0007005"/>
    <property type="project" value="TAIR"/>
</dbReference>
<dbReference type="GO" id="GO:0022627">
    <property type="term" value="C:cytosolic small ribosomal subunit"/>
    <property type="evidence" value="ECO:0007005"/>
    <property type="project" value="TAIR"/>
</dbReference>
<dbReference type="GO" id="GO:0005634">
    <property type="term" value="C:nucleus"/>
    <property type="evidence" value="ECO:0000314"/>
    <property type="project" value="TAIR"/>
</dbReference>
<dbReference type="GO" id="GO:0003735">
    <property type="term" value="F:structural constituent of ribosome"/>
    <property type="evidence" value="ECO:0000314"/>
    <property type="project" value="CAFA"/>
</dbReference>
<dbReference type="GO" id="GO:0009658">
    <property type="term" value="P:chloroplast organization"/>
    <property type="evidence" value="ECO:0000316"/>
    <property type="project" value="TAIR"/>
</dbReference>
<dbReference type="GO" id="GO:0006412">
    <property type="term" value="P:translation"/>
    <property type="evidence" value="ECO:0007669"/>
    <property type="project" value="InterPro"/>
</dbReference>
<dbReference type="FunFam" id="3.30.1230.20:FF:000002">
    <property type="entry name" value="40S ribosomal protein S21"/>
    <property type="match status" value="1"/>
</dbReference>
<dbReference type="Gene3D" id="3.30.1230.20">
    <property type="match status" value="1"/>
</dbReference>
<dbReference type="InterPro" id="IPR001931">
    <property type="entry name" value="Ribosomal_eS21"/>
</dbReference>
<dbReference type="InterPro" id="IPR018279">
    <property type="entry name" value="Ribosomal_eS21_CS"/>
</dbReference>
<dbReference type="InterPro" id="IPR038579">
    <property type="entry name" value="Ribosomal_eS21_sf"/>
</dbReference>
<dbReference type="PANTHER" id="PTHR10442">
    <property type="entry name" value="40S RIBOSOMAL PROTEIN S21"/>
    <property type="match status" value="1"/>
</dbReference>
<dbReference type="Pfam" id="PF01249">
    <property type="entry name" value="Ribosomal_S21e"/>
    <property type="match status" value="1"/>
</dbReference>
<dbReference type="PIRSF" id="PIRSF002148">
    <property type="entry name" value="Ribosomal_S21e"/>
    <property type="match status" value="1"/>
</dbReference>
<dbReference type="PROSITE" id="PS00996">
    <property type="entry name" value="RIBOSOMAL_S21E"/>
    <property type="match status" value="1"/>
</dbReference>
<gene>
    <name type="primary">RPS21B</name>
    <name type="ordered locus">At3g53890</name>
    <name type="ORF">F5K20_190</name>
</gene>
<keyword id="KW-0007">Acetylation</keyword>
<keyword id="KW-1185">Reference proteome</keyword>
<keyword id="KW-0687">Ribonucleoprotein</keyword>
<keyword id="KW-0689">Ribosomal protein</keyword>
<organism>
    <name type="scientific">Arabidopsis thaliana</name>
    <name type="common">Mouse-ear cress</name>
    <dbReference type="NCBI Taxonomy" id="3702"/>
    <lineage>
        <taxon>Eukaryota</taxon>
        <taxon>Viridiplantae</taxon>
        <taxon>Streptophyta</taxon>
        <taxon>Embryophyta</taxon>
        <taxon>Tracheophyta</taxon>
        <taxon>Spermatophyta</taxon>
        <taxon>Magnoliopsida</taxon>
        <taxon>eudicotyledons</taxon>
        <taxon>Gunneridae</taxon>
        <taxon>Pentapetalae</taxon>
        <taxon>rosids</taxon>
        <taxon>malvids</taxon>
        <taxon>Brassicales</taxon>
        <taxon>Brassicaceae</taxon>
        <taxon>Camelineae</taxon>
        <taxon>Arabidopsis</taxon>
    </lineage>
</organism>
<name>RS211_ARATH</name>
<comment type="similarity">
    <text evidence="2">Belongs to the eukaryotic ribosomal protein eS21 family.</text>
</comment>
<reference key="1">
    <citation type="journal article" date="2000" name="Nature">
        <title>Sequence and analysis of chromosome 3 of the plant Arabidopsis thaliana.</title>
        <authorList>
            <person name="Salanoubat M."/>
            <person name="Lemcke K."/>
            <person name="Rieger M."/>
            <person name="Ansorge W."/>
            <person name="Unseld M."/>
            <person name="Fartmann B."/>
            <person name="Valle G."/>
            <person name="Bloecker H."/>
            <person name="Perez-Alonso M."/>
            <person name="Obermaier B."/>
            <person name="Delseny M."/>
            <person name="Boutry M."/>
            <person name="Grivell L.A."/>
            <person name="Mache R."/>
            <person name="Puigdomenech P."/>
            <person name="De Simone V."/>
            <person name="Choisne N."/>
            <person name="Artiguenave F."/>
            <person name="Robert C."/>
            <person name="Brottier P."/>
            <person name="Wincker P."/>
            <person name="Cattolico L."/>
            <person name="Weissenbach J."/>
            <person name="Saurin W."/>
            <person name="Quetier F."/>
            <person name="Schaefer M."/>
            <person name="Mueller-Auer S."/>
            <person name="Gabel C."/>
            <person name="Fuchs M."/>
            <person name="Benes V."/>
            <person name="Wurmbach E."/>
            <person name="Drzonek H."/>
            <person name="Erfle H."/>
            <person name="Jordan N."/>
            <person name="Bangert S."/>
            <person name="Wiedelmann R."/>
            <person name="Kranz H."/>
            <person name="Voss H."/>
            <person name="Holland R."/>
            <person name="Brandt P."/>
            <person name="Nyakatura G."/>
            <person name="Vezzi A."/>
            <person name="D'Angelo M."/>
            <person name="Pallavicini A."/>
            <person name="Toppo S."/>
            <person name="Simionati B."/>
            <person name="Conrad A."/>
            <person name="Hornischer K."/>
            <person name="Kauer G."/>
            <person name="Loehnert T.-H."/>
            <person name="Nordsiek G."/>
            <person name="Reichelt J."/>
            <person name="Scharfe M."/>
            <person name="Schoen O."/>
            <person name="Bargues M."/>
            <person name="Terol J."/>
            <person name="Climent J."/>
            <person name="Navarro P."/>
            <person name="Collado C."/>
            <person name="Perez-Perez A."/>
            <person name="Ottenwaelder B."/>
            <person name="Duchemin D."/>
            <person name="Cooke R."/>
            <person name="Laudie M."/>
            <person name="Berger-Llauro C."/>
            <person name="Purnelle B."/>
            <person name="Masuy D."/>
            <person name="de Haan M."/>
            <person name="Maarse A.C."/>
            <person name="Alcaraz J.-P."/>
            <person name="Cottet A."/>
            <person name="Casacuberta E."/>
            <person name="Monfort A."/>
            <person name="Argiriou A."/>
            <person name="Flores M."/>
            <person name="Liguori R."/>
            <person name="Vitale D."/>
            <person name="Mannhaupt G."/>
            <person name="Haase D."/>
            <person name="Schoof H."/>
            <person name="Rudd S."/>
            <person name="Zaccaria P."/>
            <person name="Mewes H.-W."/>
            <person name="Mayer K.F.X."/>
            <person name="Kaul S."/>
            <person name="Town C.D."/>
            <person name="Koo H.L."/>
            <person name="Tallon L.J."/>
            <person name="Jenkins J."/>
            <person name="Rooney T."/>
            <person name="Rizzo M."/>
            <person name="Walts A."/>
            <person name="Utterback T."/>
            <person name="Fujii C.Y."/>
            <person name="Shea T.P."/>
            <person name="Creasy T.H."/>
            <person name="Haas B."/>
            <person name="Maiti R."/>
            <person name="Wu D."/>
            <person name="Peterson J."/>
            <person name="Van Aken S."/>
            <person name="Pai G."/>
            <person name="Militscher J."/>
            <person name="Sellers P."/>
            <person name="Gill J.E."/>
            <person name="Feldblyum T.V."/>
            <person name="Preuss D."/>
            <person name="Lin X."/>
            <person name="Nierman W.C."/>
            <person name="Salzberg S.L."/>
            <person name="White O."/>
            <person name="Venter J.C."/>
            <person name="Fraser C.M."/>
            <person name="Kaneko T."/>
            <person name="Nakamura Y."/>
            <person name="Sato S."/>
            <person name="Kato T."/>
            <person name="Asamizu E."/>
            <person name="Sasamoto S."/>
            <person name="Kimura T."/>
            <person name="Idesawa K."/>
            <person name="Kawashima K."/>
            <person name="Kishida Y."/>
            <person name="Kiyokawa C."/>
            <person name="Kohara M."/>
            <person name="Matsumoto M."/>
            <person name="Matsuno A."/>
            <person name="Muraki A."/>
            <person name="Nakayama S."/>
            <person name="Nakazaki N."/>
            <person name="Shinpo S."/>
            <person name="Takeuchi C."/>
            <person name="Wada T."/>
            <person name="Watanabe A."/>
            <person name="Yamada M."/>
            <person name="Yasuda M."/>
            <person name="Tabata S."/>
        </authorList>
    </citation>
    <scope>NUCLEOTIDE SEQUENCE [LARGE SCALE GENOMIC DNA]</scope>
    <source>
        <strain>cv. Columbia</strain>
    </source>
</reference>
<reference key="2">
    <citation type="journal article" date="2017" name="Plant J.">
        <title>Araport11: a complete reannotation of the Arabidopsis thaliana reference genome.</title>
        <authorList>
            <person name="Cheng C.Y."/>
            <person name="Krishnakumar V."/>
            <person name="Chan A.P."/>
            <person name="Thibaud-Nissen F."/>
            <person name="Schobel S."/>
            <person name="Town C.D."/>
        </authorList>
    </citation>
    <scope>GENOME REANNOTATION</scope>
    <source>
        <strain>cv. Columbia</strain>
    </source>
</reference>
<reference key="3">
    <citation type="journal article" date="2003" name="Science">
        <title>Empirical analysis of transcriptional activity in the Arabidopsis genome.</title>
        <authorList>
            <person name="Yamada K."/>
            <person name="Lim J."/>
            <person name="Dale J.M."/>
            <person name="Chen H."/>
            <person name="Shinn P."/>
            <person name="Palm C.J."/>
            <person name="Southwick A.M."/>
            <person name="Wu H.C."/>
            <person name="Kim C.J."/>
            <person name="Nguyen M."/>
            <person name="Pham P.K."/>
            <person name="Cheuk R.F."/>
            <person name="Karlin-Newmann G."/>
            <person name="Liu S.X."/>
            <person name="Lam B."/>
            <person name="Sakano H."/>
            <person name="Wu T."/>
            <person name="Yu G."/>
            <person name="Miranda M."/>
            <person name="Quach H.L."/>
            <person name="Tripp M."/>
            <person name="Chang C.H."/>
            <person name="Lee J.M."/>
            <person name="Toriumi M.J."/>
            <person name="Chan M.M."/>
            <person name="Tang C.C."/>
            <person name="Onodera C.S."/>
            <person name="Deng J.M."/>
            <person name="Akiyama K."/>
            <person name="Ansari Y."/>
            <person name="Arakawa T."/>
            <person name="Banh J."/>
            <person name="Banno F."/>
            <person name="Bowser L."/>
            <person name="Brooks S.Y."/>
            <person name="Carninci P."/>
            <person name="Chao Q."/>
            <person name="Choy N."/>
            <person name="Enju A."/>
            <person name="Goldsmith A.D."/>
            <person name="Gurjal M."/>
            <person name="Hansen N.F."/>
            <person name="Hayashizaki Y."/>
            <person name="Johnson-Hopson C."/>
            <person name="Hsuan V.W."/>
            <person name="Iida K."/>
            <person name="Karnes M."/>
            <person name="Khan S."/>
            <person name="Koesema E."/>
            <person name="Ishida J."/>
            <person name="Jiang P.X."/>
            <person name="Jones T."/>
            <person name="Kawai J."/>
            <person name="Kamiya A."/>
            <person name="Meyers C."/>
            <person name="Nakajima M."/>
            <person name="Narusaka M."/>
            <person name="Seki M."/>
            <person name="Sakurai T."/>
            <person name="Satou M."/>
            <person name="Tamse R."/>
            <person name="Vaysberg M."/>
            <person name="Wallender E.K."/>
            <person name="Wong C."/>
            <person name="Yamamura Y."/>
            <person name="Yuan S."/>
            <person name="Shinozaki K."/>
            <person name="Davis R.W."/>
            <person name="Theologis A."/>
            <person name="Ecker J.R."/>
        </authorList>
    </citation>
    <scope>NUCLEOTIDE SEQUENCE [LARGE SCALE MRNA]</scope>
    <source>
        <strain>cv. Columbia</strain>
    </source>
</reference>
<reference key="4">
    <citation type="journal article" date="2001" name="Plant Physiol.">
        <title>The organization of cytoplasmic ribosomal protein genes in the Arabidopsis genome.</title>
        <authorList>
            <person name="Barakat A."/>
            <person name="Szick-Miranda K."/>
            <person name="Chang I.-F."/>
            <person name="Guyot R."/>
            <person name="Blanc G."/>
            <person name="Cooke R."/>
            <person name="Delseny M."/>
            <person name="Bailey-Serres J."/>
        </authorList>
    </citation>
    <scope>GENE FAMILY ORGANIZATION</scope>
    <scope>NOMENCLATURE</scope>
</reference>
<reference key="5">
    <citation type="journal article" date="2012" name="Mol. Cell. Proteomics">
        <title>Comparative large-scale characterisation of plant vs. mammal proteins reveals similar and idiosyncratic N-alpha acetylation features.</title>
        <authorList>
            <person name="Bienvenut W.V."/>
            <person name="Sumpton D."/>
            <person name="Martinez A."/>
            <person name="Lilla S."/>
            <person name="Espagne C."/>
            <person name="Meinnel T."/>
            <person name="Giglione C."/>
        </authorList>
    </citation>
    <scope>ACETYLATION [LARGE SCALE ANALYSIS] AT MET-1</scope>
    <scope>IDENTIFICATION BY MASS SPECTROMETRY [LARGE SCALE ANALYSIS]</scope>
</reference>
<reference key="6">
    <citation type="journal article" date="2023" name="Plant Cell">
        <title>An updated nomenclature for plant ribosomal protein genes.</title>
        <authorList>
            <person name="Scarpin M.R."/>
            <person name="Busche M."/>
            <person name="Martinez R.E."/>
            <person name="Harper L.C."/>
            <person name="Reiser L."/>
            <person name="Szakonyi D."/>
            <person name="Merchante C."/>
            <person name="Lan T."/>
            <person name="Xiong W."/>
            <person name="Mo B."/>
            <person name="Tang G."/>
            <person name="Chen X."/>
            <person name="Bailey-Serres J."/>
            <person name="Browning K.S."/>
            <person name="Brunkard J.O."/>
        </authorList>
    </citation>
    <scope>NOMENCLATURE</scope>
</reference>
<feature type="chain" id="PRO_0000194750" description="Small ribosomal subunit protein eS21z">
    <location>
        <begin position="1"/>
        <end position="82"/>
    </location>
</feature>
<feature type="modified residue" description="N-acetylmethionine" evidence="3">
    <location>
        <position position="1"/>
    </location>
</feature>
<sequence length="82" mass="9074">MENDAGQVTELYIPRKCSATNRMITSKDHASVQLNIGHLDANGLYTGQFTTFALCGFVRAQGDADSGVDRLWQKKKVEAKQQ</sequence>
<protein>
    <recommendedName>
        <fullName evidence="1">Small ribosomal subunit protein eS21z</fullName>
    </recommendedName>
    <alternativeName>
        <fullName>40S ribosomal protein S21-1</fullName>
    </alternativeName>
</protein>
<accession>Q9M337</accession>
<proteinExistence type="evidence at protein level"/>
<evidence type="ECO:0000303" key="1">
    <source>
    </source>
</evidence>
<evidence type="ECO:0000305" key="2"/>
<evidence type="ECO:0007744" key="3">
    <source>
    </source>
</evidence>